<reference key="1">
    <citation type="journal article" date="2006" name="Lancet">
        <title>Complete genome sequence of USA300, an epidemic clone of community-acquired meticillin-resistant Staphylococcus aureus.</title>
        <authorList>
            <person name="Diep B.A."/>
            <person name="Gill S.R."/>
            <person name="Chang R.F."/>
            <person name="Phan T.H."/>
            <person name="Chen J.H."/>
            <person name="Davidson M.G."/>
            <person name="Lin F."/>
            <person name="Lin J."/>
            <person name="Carleton H.A."/>
            <person name="Mongodin E.F."/>
            <person name="Sensabaugh G.F."/>
            <person name="Perdreau-Remington F."/>
        </authorList>
    </citation>
    <scope>NUCLEOTIDE SEQUENCE [LARGE SCALE GENOMIC DNA]</scope>
    <source>
        <strain>USA300</strain>
    </source>
</reference>
<dbReference type="EMBL" id="CP000255">
    <property type="protein sequence ID" value="ABD22361.1"/>
    <property type="molecule type" value="Genomic_DNA"/>
</dbReference>
<dbReference type="RefSeq" id="WP_000043634.1">
    <property type="nucleotide sequence ID" value="NZ_CP027476.1"/>
</dbReference>
<dbReference type="SMR" id="Q2FHG9"/>
<dbReference type="KEGG" id="saa:SAUSA300_1162"/>
<dbReference type="HOGENOM" id="CLU_006301_5_1_9"/>
<dbReference type="OMA" id="RKNPWMN"/>
<dbReference type="Proteomes" id="UP000001939">
    <property type="component" value="Chromosome"/>
</dbReference>
<dbReference type="GO" id="GO:0005829">
    <property type="term" value="C:cytosol"/>
    <property type="evidence" value="ECO:0007669"/>
    <property type="project" value="TreeGrafter"/>
</dbReference>
<dbReference type="GO" id="GO:0005525">
    <property type="term" value="F:GTP binding"/>
    <property type="evidence" value="ECO:0007669"/>
    <property type="project" value="UniProtKB-KW"/>
</dbReference>
<dbReference type="GO" id="GO:0003924">
    <property type="term" value="F:GTPase activity"/>
    <property type="evidence" value="ECO:0007669"/>
    <property type="project" value="UniProtKB-UniRule"/>
</dbReference>
<dbReference type="GO" id="GO:0003743">
    <property type="term" value="F:translation initiation factor activity"/>
    <property type="evidence" value="ECO:0007669"/>
    <property type="project" value="UniProtKB-UniRule"/>
</dbReference>
<dbReference type="CDD" id="cd01887">
    <property type="entry name" value="IF2_eIF5B"/>
    <property type="match status" value="1"/>
</dbReference>
<dbReference type="CDD" id="cd03702">
    <property type="entry name" value="IF2_mtIF2_II"/>
    <property type="match status" value="1"/>
</dbReference>
<dbReference type="CDD" id="cd03692">
    <property type="entry name" value="mtIF2_IVc"/>
    <property type="match status" value="1"/>
</dbReference>
<dbReference type="FunFam" id="1.10.10.2480:FF:000002">
    <property type="entry name" value="Translation initiation factor IF-2"/>
    <property type="match status" value="1"/>
</dbReference>
<dbReference type="FunFam" id="2.40.30.10:FF:000007">
    <property type="entry name" value="Translation initiation factor IF-2"/>
    <property type="match status" value="1"/>
</dbReference>
<dbReference type="FunFam" id="2.40.30.10:FF:000008">
    <property type="entry name" value="Translation initiation factor IF-2"/>
    <property type="match status" value="1"/>
</dbReference>
<dbReference type="FunFam" id="3.40.50.10050:FF:000001">
    <property type="entry name" value="Translation initiation factor IF-2"/>
    <property type="match status" value="1"/>
</dbReference>
<dbReference type="FunFam" id="3.40.50.300:FF:000019">
    <property type="entry name" value="Translation initiation factor IF-2"/>
    <property type="match status" value="1"/>
</dbReference>
<dbReference type="Gene3D" id="1.10.10.2480">
    <property type="match status" value="1"/>
</dbReference>
<dbReference type="Gene3D" id="3.40.50.300">
    <property type="entry name" value="P-loop containing nucleotide triphosphate hydrolases"/>
    <property type="match status" value="1"/>
</dbReference>
<dbReference type="Gene3D" id="2.40.30.10">
    <property type="entry name" value="Translation factors"/>
    <property type="match status" value="2"/>
</dbReference>
<dbReference type="Gene3D" id="3.40.50.10050">
    <property type="entry name" value="Translation initiation factor IF- 2, domain 3"/>
    <property type="match status" value="1"/>
</dbReference>
<dbReference type="HAMAP" id="MF_00100_B">
    <property type="entry name" value="IF_2_B"/>
    <property type="match status" value="1"/>
</dbReference>
<dbReference type="InterPro" id="IPR053905">
    <property type="entry name" value="EF-G-like_DII"/>
</dbReference>
<dbReference type="InterPro" id="IPR044145">
    <property type="entry name" value="IF2_II"/>
</dbReference>
<dbReference type="InterPro" id="IPR006847">
    <property type="entry name" value="IF2_N"/>
</dbReference>
<dbReference type="InterPro" id="IPR027417">
    <property type="entry name" value="P-loop_NTPase"/>
</dbReference>
<dbReference type="InterPro" id="IPR005225">
    <property type="entry name" value="Small_GTP-bd"/>
</dbReference>
<dbReference type="InterPro" id="IPR000795">
    <property type="entry name" value="T_Tr_GTP-bd_dom"/>
</dbReference>
<dbReference type="InterPro" id="IPR000178">
    <property type="entry name" value="TF_IF2_bacterial-like"/>
</dbReference>
<dbReference type="InterPro" id="IPR015760">
    <property type="entry name" value="TIF_IF2"/>
</dbReference>
<dbReference type="InterPro" id="IPR023115">
    <property type="entry name" value="TIF_IF2_dom3"/>
</dbReference>
<dbReference type="InterPro" id="IPR036925">
    <property type="entry name" value="TIF_IF2_dom3_sf"/>
</dbReference>
<dbReference type="InterPro" id="IPR009000">
    <property type="entry name" value="Transl_B-barrel_sf"/>
</dbReference>
<dbReference type="NCBIfam" id="TIGR00487">
    <property type="entry name" value="IF-2"/>
    <property type="match status" value="1"/>
</dbReference>
<dbReference type="NCBIfam" id="TIGR00231">
    <property type="entry name" value="small_GTP"/>
    <property type="match status" value="1"/>
</dbReference>
<dbReference type="PANTHER" id="PTHR43381:SF5">
    <property type="entry name" value="TR-TYPE G DOMAIN-CONTAINING PROTEIN"/>
    <property type="match status" value="1"/>
</dbReference>
<dbReference type="PANTHER" id="PTHR43381">
    <property type="entry name" value="TRANSLATION INITIATION FACTOR IF-2-RELATED"/>
    <property type="match status" value="1"/>
</dbReference>
<dbReference type="Pfam" id="PF22042">
    <property type="entry name" value="EF-G_D2"/>
    <property type="match status" value="1"/>
</dbReference>
<dbReference type="Pfam" id="PF00009">
    <property type="entry name" value="GTP_EFTU"/>
    <property type="match status" value="1"/>
</dbReference>
<dbReference type="Pfam" id="PF11987">
    <property type="entry name" value="IF-2"/>
    <property type="match status" value="1"/>
</dbReference>
<dbReference type="Pfam" id="PF04760">
    <property type="entry name" value="IF2_N"/>
    <property type="match status" value="2"/>
</dbReference>
<dbReference type="SUPFAM" id="SSF52156">
    <property type="entry name" value="Initiation factor IF2/eIF5b, domain 3"/>
    <property type="match status" value="1"/>
</dbReference>
<dbReference type="SUPFAM" id="SSF52540">
    <property type="entry name" value="P-loop containing nucleoside triphosphate hydrolases"/>
    <property type="match status" value="1"/>
</dbReference>
<dbReference type="SUPFAM" id="SSF50447">
    <property type="entry name" value="Translation proteins"/>
    <property type="match status" value="2"/>
</dbReference>
<dbReference type="PROSITE" id="PS51722">
    <property type="entry name" value="G_TR_2"/>
    <property type="match status" value="1"/>
</dbReference>
<dbReference type="PROSITE" id="PS01176">
    <property type="entry name" value="IF2"/>
    <property type="match status" value="1"/>
</dbReference>
<protein>
    <recommendedName>
        <fullName evidence="2">Translation initiation factor IF-2</fullName>
    </recommendedName>
</protein>
<proteinExistence type="inferred from homology"/>
<organism>
    <name type="scientific">Staphylococcus aureus (strain USA300)</name>
    <dbReference type="NCBI Taxonomy" id="367830"/>
    <lineage>
        <taxon>Bacteria</taxon>
        <taxon>Bacillati</taxon>
        <taxon>Bacillota</taxon>
        <taxon>Bacilli</taxon>
        <taxon>Bacillales</taxon>
        <taxon>Staphylococcaceae</taxon>
        <taxon>Staphylococcus</taxon>
    </lineage>
</organism>
<evidence type="ECO:0000250" key="1"/>
<evidence type="ECO:0000255" key="2">
    <source>
        <dbReference type="HAMAP-Rule" id="MF_00100"/>
    </source>
</evidence>
<evidence type="ECO:0000256" key="3">
    <source>
        <dbReference type="SAM" id="MobiDB-lite"/>
    </source>
</evidence>
<feature type="chain" id="PRO_1000008346" description="Translation initiation factor IF-2">
    <location>
        <begin position="1"/>
        <end position="705"/>
    </location>
</feature>
<feature type="domain" description="tr-type G">
    <location>
        <begin position="207"/>
        <end position="376"/>
    </location>
</feature>
<feature type="region of interest" description="Disordered" evidence="3">
    <location>
        <begin position="40"/>
        <end position="124"/>
    </location>
</feature>
<feature type="region of interest" description="G1" evidence="1">
    <location>
        <begin position="216"/>
        <end position="223"/>
    </location>
</feature>
<feature type="region of interest" description="G2" evidence="1">
    <location>
        <begin position="241"/>
        <end position="245"/>
    </location>
</feature>
<feature type="region of interest" description="G3" evidence="1">
    <location>
        <begin position="262"/>
        <end position="265"/>
    </location>
</feature>
<feature type="region of interest" description="G4" evidence="1">
    <location>
        <begin position="316"/>
        <end position="319"/>
    </location>
</feature>
<feature type="region of interest" description="G5" evidence="1">
    <location>
        <begin position="352"/>
        <end position="354"/>
    </location>
</feature>
<feature type="compositionally biased region" description="Basic and acidic residues" evidence="3">
    <location>
        <begin position="41"/>
        <end position="58"/>
    </location>
</feature>
<feature type="compositionally biased region" description="Low complexity" evidence="3">
    <location>
        <begin position="59"/>
        <end position="77"/>
    </location>
</feature>
<feature type="compositionally biased region" description="Basic residues" evidence="3">
    <location>
        <begin position="94"/>
        <end position="108"/>
    </location>
</feature>
<feature type="binding site" evidence="2">
    <location>
        <begin position="216"/>
        <end position="223"/>
    </location>
    <ligand>
        <name>GTP</name>
        <dbReference type="ChEBI" id="CHEBI:37565"/>
    </ligand>
</feature>
<feature type="binding site" evidence="2">
    <location>
        <begin position="262"/>
        <end position="266"/>
    </location>
    <ligand>
        <name>GTP</name>
        <dbReference type="ChEBI" id="CHEBI:37565"/>
    </ligand>
</feature>
<feature type="binding site" evidence="2">
    <location>
        <begin position="316"/>
        <end position="319"/>
    </location>
    <ligand>
        <name>GTP</name>
        <dbReference type="ChEBI" id="CHEBI:37565"/>
    </ligand>
</feature>
<keyword id="KW-0963">Cytoplasm</keyword>
<keyword id="KW-0342">GTP-binding</keyword>
<keyword id="KW-0396">Initiation factor</keyword>
<keyword id="KW-0547">Nucleotide-binding</keyword>
<keyword id="KW-0648">Protein biosynthesis</keyword>
<sequence length="705" mass="77871">MSKQRIYEYAKELNLKSKEIIDELKSMNIEVSNHMQALEDDQIKALDKKFKKEQKNDNKQSTQNNHQKSNNQNQNKGQQKDNKKNQQQNNKGNKGNKKNNRNNKKNNKNNKPQNQPAAPKEIPSKVTYQEGITVGEFADKLNVESSEIIKKLFLLGIVANINQSLNQETIELIADDYGVEVEEEVVINEEDLSIYFEDEKDDPEAIERPAVVTIMGHVDHGKTTLLDSIRHTKVTAGEAGGITQHIGAYQIENDGKKITFLDTPGHAAFTTMRARGAQVTDITILVVAADDGVMPQTIEAINHAKEAEVPIIVAVNKIDKPTSNPDRVMQELTEYGLIPEDWGGETIFVPLSALSGDGIDDLLEMIGLVAEVQELKANPKNRAVGTVIEAELDKSRGPSASLLVQNGTLNVGDAIVVGNTYGRIRAMVNDLGQRIKTAGPSTPVEITGINDVPQAGDRFVVFSDEKQARRIGESRHEASIIQQRQESKNVSLDNLFEQMKQGEMKDLNVIIKGDVQGSVEALAASLMKIDVEGVNVRIIHTAVGAINESDVTLANASNGIIIGFNVRPDSGAKRAAEAENVDMRLHRVIYNVIEEIESAMKGLLDPEFEEQVIGQAEVRQTFKVSKVGTIAGCYVTEGKITRNAGVRIIRDGIVQYEGELDTLKRFKDDAKEVAKGYECGITIENYNDLKEGDVIEAFEMVEIKR</sequence>
<comment type="function">
    <text evidence="2">One of the essential components for the initiation of protein synthesis. Protects formylmethionyl-tRNA from spontaneous hydrolysis and promotes its binding to the 30S ribosomal subunits. Also involved in the hydrolysis of GTP during the formation of the 70S ribosomal complex.</text>
</comment>
<comment type="subcellular location">
    <subcellularLocation>
        <location evidence="2">Cytoplasm</location>
    </subcellularLocation>
</comment>
<comment type="similarity">
    <text evidence="2">Belongs to the TRAFAC class translation factor GTPase superfamily. Classic translation factor GTPase family. IF-2 subfamily.</text>
</comment>
<accession>Q2FHG9</accession>
<gene>
    <name evidence="2" type="primary">infB</name>
    <name type="ordered locus">SAUSA300_1162</name>
</gene>
<name>IF2_STAA3</name>